<reference key="1">
    <citation type="journal article" date="2003" name="Nat. Genet.">
        <title>Comparative analysis of the genome sequences of Bordetella pertussis, Bordetella parapertussis and Bordetella bronchiseptica.</title>
        <authorList>
            <person name="Parkhill J."/>
            <person name="Sebaihia M."/>
            <person name="Preston A."/>
            <person name="Murphy L.D."/>
            <person name="Thomson N.R."/>
            <person name="Harris D.E."/>
            <person name="Holden M.T.G."/>
            <person name="Churcher C.M."/>
            <person name="Bentley S.D."/>
            <person name="Mungall K.L."/>
            <person name="Cerdeno-Tarraga A.-M."/>
            <person name="Temple L."/>
            <person name="James K.D."/>
            <person name="Harris B."/>
            <person name="Quail M.A."/>
            <person name="Achtman M."/>
            <person name="Atkin R."/>
            <person name="Baker S."/>
            <person name="Basham D."/>
            <person name="Bason N."/>
            <person name="Cherevach I."/>
            <person name="Chillingworth T."/>
            <person name="Collins M."/>
            <person name="Cronin A."/>
            <person name="Davis P."/>
            <person name="Doggett J."/>
            <person name="Feltwell T."/>
            <person name="Goble A."/>
            <person name="Hamlin N."/>
            <person name="Hauser H."/>
            <person name="Holroyd S."/>
            <person name="Jagels K."/>
            <person name="Leather S."/>
            <person name="Moule S."/>
            <person name="Norberczak H."/>
            <person name="O'Neil S."/>
            <person name="Ormond D."/>
            <person name="Price C."/>
            <person name="Rabbinowitsch E."/>
            <person name="Rutter S."/>
            <person name="Sanders M."/>
            <person name="Saunders D."/>
            <person name="Seeger K."/>
            <person name="Sharp S."/>
            <person name="Simmonds M."/>
            <person name="Skelton J."/>
            <person name="Squares R."/>
            <person name="Squares S."/>
            <person name="Stevens K."/>
            <person name="Unwin L."/>
            <person name="Whitehead S."/>
            <person name="Barrell B.G."/>
            <person name="Maskell D.J."/>
        </authorList>
    </citation>
    <scope>NUCLEOTIDE SEQUENCE [LARGE SCALE GENOMIC DNA]</scope>
    <source>
        <strain>ATCC BAA-588 / NCTC 13252 / RB50</strain>
    </source>
</reference>
<name>GLYA2_BORBR</name>
<dbReference type="EC" id="2.1.2.1" evidence="1"/>
<dbReference type="EMBL" id="BX640450">
    <property type="protein sequence ID" value="CAE34711.1"/>
    <property type="molecule type" value="Genomic_DNA"/>
</dbReference>
<dbReference type="SMR" id="Q7WFD2"/>
<dbReference type="KEGG" id="bbr:BB4348"/>
<dbReference type="eggNOG" id="COG0112">
    <property type="taxonomic scope" value="Bacteria"/>
</dbReference>
<dbReference type="HOGENOM" id="CLU_022477_2_1_4"/>
<dbReference type="UniPathway" id="UPA00193"/>
<dbReference type="UniPathway" id="UPA00288">
    <property type="reaction ID" value="UER01023"/>
</dbReference>
<dbReference type="Proteomes" id="UP000001027">
    <property type="component" value="Chromosome"/>
</dbReference>
<dbReference type="GO" id="GO:0005829">
    <property type="term" value="C:cytosol"/>
    <property type="evidence" value="ECO:0007669"/>
    <property type="project" value="TreeGrafter"/>
</dbReference>
<dbReference type="GO" id="GO:0004372">
    <property type="term" value="F:glycine hydroxymethyltransferase activity"/>
    <property type="evidence" value="ECO:0007669"/>
    <property type="project" value="UniProtKB-UniRule"/>
</dbReference>
<dbReference type="GO" id="GO:0030170">
    <property type="term" value="F:pyridoxal phosphate binding"/>
    <property type="evidence" value="ECO:0007669"/>
    <property type="project" value="UniProtKB-UniRule"/>
</dbReference>
<dbReference type="GO" id="GO:0019264">
    <property type="term" value="P:glycine biosynthetic process from serine"/>
    <property type="evidence" value="ECO:0007669"/>
    <property type="project" value="UniProtKB-UniRule"/>
</dbReference>
<dbReference type="GO" id="GO:0035999">
    <property type="term" value="P:tetrahydrofolate interconversion"/>
    <property type="evidence" value="ECO:0007669"/>
    <property type="project" value="UniProtKB-UniRule"/>
</dbReference>
<dbReference type="CDD" id="cd00378">
    <property type="entry name" value="SHMT"/>
    <property type="match status" value="1"/>
</dbReference>
<dbReference type="FunFam" id="3.40.640.10:FF:000001">
    <property type="entry name" value="Serine hydroxymethyltransferase"/>
    <property type="match status" value="1"/>
</dbReference>
<dbReference type="FunFam" id="3.90.1150.10:FF:000003">
    <property type="entry name" value="Serine hydroxymethyltransferase"/>
    <property type="match status" value="1"/>
</dbReference>
<dbReference type="Gene3D" id="3.90.1150.10">
    <property type="entry name" value="Aspartate Aminotransferase, domain 1"/>
    <property type="match status" value="1"/>
</dbReference>
<dbReference type="Gene3D" id="3.40.640.10">
    <property type="entry name" value="Type I PLP-dependent aspartate aminotransferase-like (Major domain)"/>
    <property type="match status" value="1"/>
</dbReference>
<dbReference type="HAMAP" id="MF_00051">
    <property type="entry name" value="SHMT"/>
    <property type="match status" value="1"/>
</dbReference>
<dbReference type="InterPro" id="IPR015424">
    <property type="entry name" value="PyrdxlP-dep_Trfase"/>
</dbReference>
<dbReference type="InterPro" id="IPR015421">
    <property type="entry name" value="PyrdxlP-dep_Trfase_major"/>
</dbReference>
<dbReference type="InterPro" id="IPR015422">
    <property type="entry name" value="PyrdxlP-dep_Trfase_small"/>
</dbReference>
<dbReference type="InterPro" id="IPR001085">
    <property type="entry name" value="Ser_HO-MeTrfase"/>
</dbReference>
<dbReference type="InterPro" id="IPR049943">
    <property type="entry name" value="Ser_HO-MeTrfase-like"/>
</dbReference>
<dbReference type="InterPro" id="IPR019798">
    <property type="entry name" value="Ser_HO-MeTrfase_PLP_BS"/>
</dbReference>
<dbReference type="InterPro" id="IPR039429">
    <property type="entry name" value="SHMT-like_dom"/>
</dbReference>
<dbReference type="NCBIfam" id="NF000586">
    <property type="entry name" value="PRK00011.1"/>
    <property type="match status" value="1"/>
</dbReference>
<dbReference type="PANTHER" id="PTHR11680">
    <property type="entry name" value="SERINE HYDROXYMETHYLTRANSFERASE"/>
    <property type="match status" value="1"/>
</dbReference>
<dbReference type="PANTHER" id="PTHR11680:SF50">
    <property type="entry name" value="SERINE HYDROXYMETHYLTRANSFERASE"/>
    <property type="match status" value="1"/>
</dbReference>
<dbReference type="Pfam" id="PF00464">
    <property type="entry name" value="SHMT"/>
    <property type="match status" value="1"/>
</dbReference>
<dbReference type="PIRSF" id="PIRSF000412">
    <property type="entry name" value="SHMT"/>
    <property type="match status" value="1"/>
</dbReference>
<dbReference type="SUPFAM" id="SSF53383">
    <property type="entry name" value="PLP-dependent transferases"/>
    <property type="match status" value="1"/>
</dbReference>
<dbReference type="PROSITE" id="PS00096">
    <property type="entry name" value="SHMT"/>
    <property type="match status" value="1"/>
</dbReference>
<feature type="chain" id="PRO_0000113538" description="Serine hydroxymethyltransferase 2">
    <location>
        <begin position="1"/>
        <end position="415"/>
    </location>
</feature>
<feature type="binding site" evidence="1">
    <location>
        <position position="121"/>
    </location>
    <ligand>
        <name>(6S)-5,6,7,8-tetrahydrofolate</name>
        <dbReference type="ChEBI" id="CHEBI:57453"/>
    </ligand>
</feature>
<feature type="binding site" evidence="1">
    <location>
        <begin position="125"/>
        <end position="127"/>
    </location>
    <ligand>
        <name>(6S)-5,6,7,8-tetrahydrofolate</name>
        <dbReference type="ChEBI" id="CHEBI:57453"/>
    </ligand>
</feature>
<feature type="site" description="Plays an important role in substrate specificity" evidence="1">
    <location>
        <position position="228"/>
    </location>
</feature>
<feature type="modified residue" description="N6-(pyridoxal phosphate)lysine" evidence="1">
    <location>
        <position position="229"/>
    </location>
</feature>
<keyword id="KW-0028">Amino-acid biosynthesis</keyword>
<keyword id="KW-0963">Cytoplasm</keyword>
<keyword id="KW-0554">One-carbon metabolism</keyword>
<keyword id="KW-0663">Pyridoxal phosphate</keyword>
<keyword id="KW-0808">Transferase</keyword>
<comment type="function">
    <text evidence="1">Catalyzes the reversible interconversion of serine and glycine with tetrahydrofolate (THF) serving as the one-carbon carrier. This reaction serves as the major source of one-carbon groups required for the biosynthesis of purines, thymidylate, methionine, and other important biomolecules. Also exhibits THF-independent aldolase activity toward beta-hydroxyamino acids, producing glycine and aldehydes, via a retro-aldol mechanism.</text>
</comment>
<comment type="catalytic activity">
    <reaction evidence="1">
        <text>(6R)-5,10-methylene-5,6,7,8-tetrahydrofolate + glycine + H2O = (6S)-5,6,7,8-tetrahydrofolate + L-serine</text>
        <dbReference type="Rhea" id="RHEA:15481"/>
        <dbReference type="ChEBI" id="CHEBI:15377"/>
        <dbReference type="ChEBI" id="CHEBI:15636"/>
        <dbReference type="ChEBI" id="CHEBI:33384"/>
        <dbReference type="ChEBI" id="CHEBI:57305"/>
        <dbReference type="ChEBI" id="CHEBI:57453"/>
        <dbReference type="EC" id="2.1.2.1"/>
    </reaction>
</comment>
<comment type="cofactor">
    <cofactor evidence="1">
        <name>pyridoxal 5'-phosphate</name>
        <dbReference type="ChEBI" id="CHEBI:597326"/>
    </cofactor>
</comment>
<comment type="pathway">
    <text evidence="1">One-carbon metabolism; tetrahydrofolate interconversion.</text>
</comment>
<comment type="pathway">
    <text evidence="1">Amino-acid biosynthesis; glycine biosynthesis; glycine from L-serine: step 1/1.</text>
</comment>
<comment type="subunit">
    <text evidence="1">Homodimer.</text>
</comment>
<comment type="subcellular location">
    <subcellularLocation>
        <location evidence="1">Cytoplasm</location>
    </subcellularLocation>
</comment>
<comment type="similarity">
    <text evidence="1">Belongs to the SHMT family.</text>
</comment>
<gene>
    <name evidence="1" type="primary">glyA2</name>
    <name type="ordered locus">BB4348</name>
</gene>
<organism>
    <name type="scientific">Bordetella bronchiseptica (strain ATCC BAA-588 / NCTC 13252 / RB50)</name>
    <name type="common">Alcaligenes bronchisepticus</name>
    <dbReference type="NCBI Taxonomy" id="257310"/>
    <lineage>
        <taxon>Bacteria</taxon>
        <taxon>Pseudomonadati</taxon>
        <taxon>Pseudomonadota</taxon>
        <taxon>Betaproteobacteria</taxon>
        <taxon>Burkholderiales</taxon>
        <taxon>Alcaligenaceae</taxon>
        <taxon>Bordetella</taxon>
    </lineage>
</organism>
<evidence type="ECO:0000255" key="1">
    <source>
        <dbReference type="HAMAP-Rule" id="MF_00051"/>
    </source>
</evidence>
<accession>Q7WFD2</accession>
<proteinExistence type="inferred from homology"/>
<sequence>MFNRNLTLDQVDPDVWAAIQKEDVRQEQHIELIASENYASPAVMQAQGTQLTNKYAEGYPGKRYYGGCEYVDVVEQLAIDRLKQIFGAEAANVQPNSGSQANQGVYMAVLKPGDTVLGMSLAEGGHLTHGASVNASGKLYNFVPYGLDADEVLDYAQVERLTKEHKPKLIVAGASAYALHIDFERMARIAHDNGALFMVDIAHYAGLVAGGAYPNPVPHADFVTSTTHKSLRGPRGGVIMMKAEFEKAVNSAIFPGIQGGPLMHVIAAKAVAFKEALSPEFQDYAQQVVKNAKVLADTLVKRGLRIVSGRTESHVMLVDLRPKGITGKEAEAVLGQAHITVNKNAIPNDPEKPFVTSGIRLGTPAMTTRGFKEAEAELTANLIADVLDNPRDEANIAAVRARVNELTARLPVYGN</sequence>
<protein>
    <recommendedName>
        <fullName evidence="1">Serine hydroxymethyltransferase 2</fullName>
        <shortName evidence="1">SHMT 2</shortName>
        <shortName evidence="1">Serine methylase 2</shortName>
        <ecNumber evidence="1">2.1.2.1</ecNumber>
    </recommendedName>
</protein>